<accession>Q6FX42</accession>
<feature type="chain" id="PRO_0000227710" description="Serine/threonine-protein kinase MEC1">
    <location>
        <begin position="1"/>
        <end position="2379"/>
    </location>
</feature>
<feature type="domain" description="FAT" evidence="3">
    <location>
        <begin position="1410"/>
        <end position="1955"/>
    </location>
</feature>
<feature type="domain" description="PI3K/PI4K catalytic" evidence="2">
    <location>
        <begin position="2060"/>
        <end position="2363"/>
    </location>
</feature>
<feature type="domain" description="FATC" evidence="3 4">
    <location>
        <begin position="2347"/>
        <end position="2379"/>
    </location>
</feature>
<feature type="region of interest" description="G-loop" evidence="2">
    <location>
        <begin position="2066"/>
        <end position="2072"/>
    </location>
</feature>
<feature type="region of interest" description="Catalytic loop" evidence="2">
    <location>
        <begin position="2232"/>
        <end position="2240"/>
    </location>
</feature>
<feature type="region of interest" description="Activation loop" evidence="2">
    <location>
        <begin position="2252"/>
        <end position="2276"/>
    </location>
</feature>
<gene>
    <name type="primary">MEC1</name>
    <name type="ordered locus">CAGL0C00473g</name>
</gene>
<proteinExistence type="inferred from homology"/>
<reference key="1">
    <citation type="journal article" date="2004" name="Nature">
        <title>Genome evolution in yeasts.</title>
        <authorList>
            <person name="Dujon B."/>
            <person name="Sherman D."/>
            <person name="Fischer G."/>
            <person name="Durrens P."/>
            <person name="Casaregola S."/>
            <person name="Lafontaine I."/>
            <person name="de Montigny J."/>
            <person name="Marck C."/>
            <person name="Neuveglise C."/>
            <person name="Talla E."/>
            <person name="Goffard N."/>
            <person name="Frangeul L."/>
            <person name="Aigle M."/>
            <person name="Anthouard V."/>
            <person name="Babour A."/>
            <person name="Barbe V."/>
            <person name="Barnay S."/>
            <person name="Blanchin S."/>
            <person name="Beckerich J.-M."/>
            <person name="Beyne E."/>
            <person name="Bleykasten C."/>
            <person name="Boisrame A."/>
            <person name="Boyer J."/>
            <person name="Cattolico L."/>
            <person name="Confanioleri F."/>
            <person name="de Daruvar A."/>
            <person name="Despons L."/>
            <person name="Fabre E."/>
            <person name="Fairhead C."/>
            <person name="Ferry-Dumazet H."/>
            <person name="Groppi A."/>
            <person name="Hantraye F."/>
            <person name="Hennequin C."/>
            <person name="Jauniaux N."/>
            <person name="Joyet P."/>
            <person name="Kachouri R."/>
            <person name="Kerrest A."/>
            <person name="Koszul R."/>
            <person name="Lemaire M."/>
            <person name="Lesur I."/>
            <person name="Ma L."/>
            <person name="Muller H."/>
            <person name="Nicaud J.-M."/>
            <person name="Nikolski M."/>
            <person name="Oztas S."/>
            <person name="Ozier-Kalogeropoulos O."/>
            <person name="Pellenz S."/>
            <person name="Potier S."/>
            <person name="Richard G.-F."/>
            <person name="Straub M.-L."/>
            <person name="Suleau A."/>
            <person name="Swennen D."/>
            <person name="Tekaia F."/>
            <person name="Wesolowski-Louvel M."/>
            <person name="Westhof E."/>
            <person name="Wirth B."/>
            <person name="Zeniou-Meyer M."/>
            <person name="Zivanovic Y."/>
            <person name="Bolotin-Fukuhara M."/>
            <person name="Thierry A."/>
            <person name="Bouchier C."/>
            <person name="Caudron B."/>
            <person name="Scarpelli C."/>
            <person name="Gaillardin C."/>
            <person name="Weissenbach J."/>
            <person name="Wincker P."/>
            <person name="Souciet J.-L."/>
        </authorList>
    </citation>
    <scope>NUCLEOTIDE SEQUENCE [LARGE SCALE GENOMIC DNA]</scope>
    <source>
        <strain>ATCC 2001 / BCRC 20586 / JCM 3761 / NBRC 0622 / NRRL Y-65 / CBS 138</strain>
    </source>
</reference>
<evidence type="ECO:0000250" key="1"/>
<evidence type="ECO:0000255" key="2">
    <source>
        <dbReference type="PROSITE-ProRule" id="PRU00269"/>
    </source>
</evidence>
<evidence type="ECO:0000255" key="3">
    <source>
        <dbReference type="PROSITE-ProRule" id="PRU00534"/>
    </source>
</evidence>
<evidence type="ECO:0000255" key="4">
    <source>
        <dbReference type="PROSITE-ProRule" id="PRU00535"/>
    </source>
</evidence>
<evidence type="ECO:0000305" key="5"/>
<name>ATR_CANGA</name>
<protein>
    <recommendedName>
        <fullName>Serine/threonine-protein kinase MEC1</fullName>
        <ecNumber>2.7.11.1</ecNumber>
    </recommendedName>
    <alternativeName>
        <fullName>ATR homolog</fullName>
    </alternativeName>
    <alternativeName>
        <fullName>DNA-damage checkpoint kinase MEC1</fullName>
    </alternativeName>
    <alternativeName>
        <fullName>Mitosis entry checkpoint protein 1</fullName>
    </alternativeName>
</protein>
<comment type="function">
    <text evidence="1">Serine/threonine protein kinase which activates checkpoint signaling upon genotoxic stresses such as ionizing radiation (IR), ultraviolet light (UV), or DNA replication stalling, thereby acting as a DNA damage sensor. Recognizes the substrate consensus sequence [ST]-Q. Recruited to DNA lesions in order to initiate the DNA repair by homologous recombination. Phosphorylates histone H2A to form H2AS128ph (gamma-H2A) at sites of DNA damage, also involved in the regulation of DNA damage response mechanism. Required for cell growth and meiotic recombination (By similarity).</text>
</comment>
<comment type="catalytic activity">
    <reaction>
        <text>L-seryl-[protein] + ATP = O-phospho-L-seryl-[protein] + ADP + H(+)</text>
        <dbReference type="Rhea" id="RHEA:17989"/>
        <dbReference type="Rhea" id="RHEA-COMP:9863"/>
        <dbReference type="Rhea" id="RHEA-COMP:11604"/>
        <dbReference type="ChEBI" id="CHEBI:15378"/>
        <dbReference type="ChEBI" id="CHEBI:29999"/>
        <dbReference type="ChEBI" id="CHEBI:30616"/>
        <dbReference type="ChEBI" id="CHEBI:83421"/>
        <dbReference type="ChEBI" id="CHEBI:456216"/>
        <dbReference type="EC" id="2.7.11.1"/>
    </reaction>
</comment>
<comment type="catalytic activity">
    <reaction>
        <text>L-threonyl-[protein] + ATP = O-phospho-L-threonyl-[protein] + ADP + H(+)</text>
        <dbReference type="Rhea" id="RHEA:46608"/>
        <dbReference type="Rhea" id="RHEA-COMP:11060"/>
        <dbReference type="Rhea" id="RHEA-COMP:11605"/>
        <dbReference type="ChEBI" id="CHEBI:15378"/>
        <dbReference type="ChEBI" id="CHEBI:30013"/>
        <dbReference type="ChEBI" id="CHEBI:30616"/>
        <dbReference type="ChEBI" id="CHEBI:61977"/>
        <dbReference type="ChEBI" id="CHEBI:456216"/>
        <dbReference type="EC" id="2.7.11.1"/>
    </reaction>
</comment>
<comment type="subcellular location">
    <subcellularLocation>
        <location evidence="1">Nucleus</location>
    </subcellularLocation>
    <text evidence="1">Localizes to nuclear DNA repair foci in response to DNA double strand breaks.</text>
</comment>
<comment type="similarity">
    <text evidence="5">Belongs to the PI3/PI4-kinase family. ATM subfamily.</text>
</comment>
<dbReference type="EC" id="2.7.11.1"/>
<dbReference type="EMBL" id="CR380949">
    <property type="protein sequence ID" value="CAG58106.1"/>
    <property type="molecule type" value="Genomic_DNA"/>
</dbReference>
<dbReference type="RefSeq" id="XP_445202.1">
    <property type="nucleotide sequence ID" value="XM_445202.1"/>
</dbReference>
<dbReference type="SMR" id="Q6FX42"/>
<dbReference type="FunCoup" id="Q6FX42">
    <property type="interactions" value="1335"/>
</dbReference>
<dbReference type="STRING" id="284593.Q6FX42"/>
<dbReference type="EnsemblFungi" id="CAGL0C00473g-T">
    <property type="protein sequence ID" value="CAGL0C00473g-T-p1"/>
    <property type="gene ID" value="CAGL0C00473g"/>
</dbReference>
<dbReference type="KEGG" id="cgr:2886754"/>
<dbReference type="CGD" id="CAL0127418">
    <property type="gene designation" value="CAGL0C00473g"/>
</dbReference>
<dbReference type="VEuPathDB" id="FungiDB:CAGL0C00473g"/>
<dbReference type="eggNOG" id="KOG0890">
    <property type="taxonomic scope" value="Eukaryota"/>
</dbReference>
<dbReference type="HOGENOM" id="CLU_000178_4_0_1"/>
<dbReference type="InParanoid" id="Q6FX42"/>
<dbReference type="OMA" id="SMYIGWC"/>
<dbReference type="Proteomes" id="UP000002428">
    <property type="component" value="Chromosome C"/>
</dbReference>
<dbReference type="GO" id="GO:0070310">
    <property type="term" value="C:ATR-ATRIP complex"/>
    <property type="evidence" value="ECO:0007669"/>
    <property type="project" value="EnsemblFungi"/>
</dbReference>
<dbReference type="GO" id="GO:0005694">
    <property type="term" value="C:chromosome"/>
    <property type="evidence" value="ECO:0007669"/>
    <property type="project" value="TreeGrafter"/>
</dbReference>
<dbReference type="GO" id="GO:0005524">
    <property type="term" value="F:ATP binding"/>
    <property type="evidence" value="ECO:0007669"/>
    <property type="project" value="UniProtKB-KW"/>
</dbReference>
<dbReference type="GO" id="GO:0106310">
    <property type="term" value="F:protein serine kinase activity"/>
    <property type="evidence" value="ECO:0007669"/>
    <property type="project" value="RHEA"/>
</dbReference>
<dbReference type="GO" id="GO:0004674">
    <property type="term" value="F:protein serine/threonine kinase activity"/>
    <property type="evidence" value="ECO:0007669"/>
    <property type="project" value="UniProtKB-KW"/>
</dbReference>
<dbReference type="GO" id="GO:0006325">
    <property type="term" value="P:chromatin organization"/>
    <property type="evidence" value="ECO:0007669"/>
    <property type="project" value="UniProtKB-KW"/>
</dbReference>
<dbReference type="GO" id="GO:0000077">
    <property type="term" value="P:DNA damage checkpoint signaling"/>
    <property type="evidence" value="ECO:0007669"/>
    <property type="project" value="TreeGrafter"/>
</dbReference>
<dbReference type="GO" id="GO:0006281">
    <property type="term" value="P:DNA repair"/>
    <property type="evidence" value="ECO:0007669"/>
    <property type="project" value="UniProtKB-KW"/>
</dbReference>
<dbReference type="GO" id="GO:0006260">
    <property type="term" value="P:DNA replication"/>
    <property type="evidence" value="ECO:0007669"/>
    <property type="project" value="EnsemblFungi"/>
</dbReference>
<dbReference type="GO" id="GO:2000105">
    <property type="term" value="P:positive regulation of DNA-templated DNA replication"/>
    <property type="evidence" value="ECO:0007669"/>
    <property type="project" value="EnsemblFungi"/>
</dbReference>
<dbReference type="GO" id="GO:0007131">
    <property type="term" value="P:reciprocal meiotic recombination"/>
    <property type="evidence" value="ECO:0007669"/>
    <property type="project" value="EnsemblFungi"/>
</dbReference>
<dbReference type="GO" id="GO:0000722">
    <property type="term" value="P:telomere maintenance via recombination"/>
    <property type="evidence" value="ECO:0007669"/>
    <property type="project" value="EnsemblFungi"/>
</dbReference>
<dbReference type="CDD" id="cd00892">
    <property type="entry name" value="PIKKc_ATR"/>
    <property type="match status" value="1"/>
</dbReference>
<dbReference type="FunFam" id="1.10.1070.11:FF:000033">
    <property type="entry name" value="Serine/threonine-protein kinase MEC1"/>
    <property type="match status" value="1"/>
</dbReference>
<dbReference type="Gene3D" id="1.10.1070.11">
    <property type="entry name" value="Phosphatidylinositol 3-/4-kinase, catalytic domain"/>
    <property type="match status" value="1"/>
</dbReference>
<dbReference type="Gene3D" id="3.30.1010.10">
    <property type="entry name" value="Phosphatidylinositol 3-kinase Catalytic Subunit, Chain A, domain 4"/>
    <property type="match status" value="1"/>
</dbReference>
<dbReference type="InterPro" id="IPR056802">
    <property type="entry name" value="ATR-like_M-HEAT"/>
</dbReference>
<dbReference type="InterPro" id="IPR050517">
    <property type="entry name" value="DDR_Repair_Kinase"/>
</dbReference>
<dbReference type="InterPro" id="IPR003152">
    <property type="entry name" value="FATC_dom"/>
</dbReference>
<dbReference type="InterPro" id="IPR011009">
    <property type="entry name" value="Kinase-like_dom_sf"/>
</dbReference>
<dbReference type="InterPro" id="IPR000403">
    <property type="entry name" value="PI3/4_kinase_cat_dom"/>
</dbReference>
<dbReference type="InterPro" id="IPR036940">
    <property type="entry name" value="PI3/4_kinase_cat_sf"/>
</dbReference>
<dbReference type="InterPro" id="IPR018936">
    <property type="entry name" value="PI3/4_kinase_CS"/>
</dbReference>
<dbReference type="InterPro" id="IPR003151">
    <property type="entry name" value="PIK-rel_kinase_FAT"/>
</dbReference>
<dbReference type="InterPro" id="IPR014009">
    <property type="entry name" value="PIK_FAT"/>
</dbReference>
<dbReference type="InterPro" id="IPR012993">
    <property type="entry name" value="UME"/>
</dbReference>
<dbReference type="PANTHER" id="PTHR11139">
    <property type="entry name" value="ATAXIA TELANGIECTASIA MUTATED ATM -RELATED"/>
    <property type="match status" value="1"/>
</dbReference>
<dbReference type="PANTHER" id="PTHR11139:SF125">
    <property type="entry name" value="SERINE_THREONINE-PROTEIN KINASE MEC1"/>
    <property type="match status" value="1"/>
</dbReference>
<dbReference type="Pfam" id="PF02259">
    <property type="entry name" value="FAT"/>
    <property type="match status" value="1"/>
</dbReference>
<dbReference type="Pfam" id="PF02260">
    <property type="entry name" value="FATC"/>
    <property type="match status" value="1"/>
</dbReference>
<dbReference type="Pfam" id="PF23593">
    <property type="entry name" value="HEAT_ATR"/>
    <property type="match status" value="1"/>
</dbReference>
<dbReference type="Pfam" id="PF25385">
    <property type="entry name" value="HEAT_MEC1_N"/>
    <property type="match status" value="1"/>
</dbReference>
<dbReference type="Pfam" id="PF25030">
    <property type="entry name" value="M-HEAT_ATR"/>
    <property type="match status" value="1"/>
</dbReference>
<dbReference type="Pfam" id="PF00454">
    <property type="entry name" value="PI3_PI4_kinase"/>
    <property type="match status" value="1"/>
</dbReference>
<dbReference type="Pfam" id="PF08064">
    <property type="entry name" value="UME"/>
    <property type="match status" value="1"/>
</dbReference>
<dbReference type="SMART" id="SM01343">
    <property type="entry name" value="FATC"/>
    <property type="match status" value="1"/>
</dbReference>
<dbReference type="SMART" id="SM00146">
    <property type="entry name" value="PI3Kc"/>
    <property type="match status" value="1"/>
</dbReference>
<dbReference type="SMART" id="SM00802">
    <property type="entry name" value="UME"/>
    <property type="match status" value="1"/>
</dbReference>
<dbReference type="SUPFAM" id="SSF56112">
    <property type="entry name" value="Protein kinase-like (PK-like)"/>
    <property type="match status" value="1"/>
</dbReference>
<dbReference type="PROSITE" id="PS51189">
    <property type="entry name" value="FAT"/>
    <property type="match status" value="1"/>
</dbReference>
<dbReference type="PROSITE" id="PS51190">
    <property type="entry name" value="FATC"/>
    <property type="match status" value="1"/>
</dbReference>
<dbReference type="PROSITE" id="PS00915">
    <property type="entry name" value="PI3_4_KINASE_1"/>
    <property type="match status" value="1"/>
</dbReference>
<dbReference type="PROSITE" id="PS00916">
    <property type="entry name" value="PI3_4_KINASE_2"/>
    <property type="match status" value="1"/>
</dbReference>
<dbReference type="PROSITE" id="PS50290">
    <property type="entry name" value="PI3_4_KINASE_3"/>
    <property type="match status" value="1"/>
</dbReference>
<keyword id="KW-0067">ATP-binding</keyword>
<keyword id="KW-0156">Chromatin regulator</keyword>
<keyword id="KW-0227">DNA damage</keyword>
<keyword id="KW-0234">DNA repair</keyword>
<keyword id="KW-0418">Kinase</keyword>
<keyword id="KW-0469">Meiosis</keyword>
<keyword id="KW-0547">Nucleotide-binding</keyword>
<keyword id="KW-0539">Nucleus</keyword>
<keyword id="KW-1185">Reference proteome</keyword>
<keyword id="KW-0723">Serine/threonine-protein kinase</keyword>
<keyword id="KW-0808">Transferase</keyword>
<sequence>MESQIRYIDELIAGFNGSCKIERVNEGNCAAQSSNTEERKLIQAVQALLRILNDLNHNSADLIFQKCLGGLDRILHHNPYIMALSISSEDSGNLMIMDLIDKMLGLTERCSYNIHRMWYIRRNIIRWITSSTRLFGSDFKRIINLKIKKILNELETKCKLFLFTHQNVEPQEFISTLTLLHTILYWISADSNKLGDYFYWIQGSSSLNEWDLHFQKYIRIAMYLFTSFQIKIDANSSYFEKFNLLQANFIMLVANYQTSRTLSGGFNSIAISIQHLKFTLEVISEFMRNRSFLSKNETLITKSLLKIYYLSVCKASSNKNDILSIFLDYIPVVECINSKHQFNENYDSELERSLLLLYFDMKRRYADPDELQFIDSFDIWSHPDCIDEVSIITQPIKKNSKQIEKLQRSILKSYTVNIKQIHSFLFKELNSLEPGILDRNGDHYKAVVKEISISIKRSLKIRDSKKIITWLRVLSRMACIEDKLINTKQNISEFFHTTNDFCNYCDSIHDGNFLNNIEPSRPLAQDQSEIFSMINKYFILNPDLKKFSMSIKCGLFIVIERIFAHFQPTALMNENNQIAPLFSFIEDSFIDSDRHVRLLICKILPLWNTSNHNNSEDEMSMHLIQFLQKVNSPLLLETVVLSWSKITLTTHGDVFDTLLLKLIDLFNSNNFTLHIMMKEQLIRMSSLLNKTPYQLLSPVLPIILRQLSKNLNEKKLSFQRLCDLVGYTGKVILDIFQKYVIPYATVQYKSDVFSEVAKIMCDDDTSMLLQQKHNLLTKNSRQIFAVALVKHGFFSLDTMETLFLNRVPSYDRRYIGAYLPDYKTLAEVTKLYKNNEITDSSDIENENMVLCSLRYLITNFESDKRHGTEYKDINKWSDKKENQFQNNLQDNILGIFQVFSSDMHDVEGKTTYYEKLRVINGISFLVKHASNKCIISALAQLSICLQSGLEIPEVRYLSMRCWFLLIQRLNEEELTTVIDAPVAFILRKWPTFNKKLQLKALEVLTALIRTKNSLLMKMKPYISISLLSNESIPILDIDTNFSRQAARLRNTIDLVPIFVKNLQSNNKFVIEQNLDDIKFHLKRRQGELLQYDKYGNLQLNAVPSLIGALLEVAHKYRTIDHEICKKCAKCISMVGVPDIRRIDLRGDRKEKWKVFDFNDYSKTTEFLIWLIDDILVPSFWQSENPNKQLFFALVMQESLKYCGLSSQSWDINEPDKFPEQLELWNKFNSISKTTLYPLLSSLYLAQSWKEYVPIKYPSLNFRDGYKTWIKNFTLDLLKTGTTEDHPLHVFSSLIREDDGSLSSFLLPYIAQDIIIKAQSGTEYESLMDNILIELQSVVTYEIDGLNHLQRDSLKMCYEAVFSILEYCKKWATMFRQDYNNANGTFLIKEDKYLKMLKRIDYFINSIPLDLLANKSLETNAFERSALYLEECYRHSDIHDRNLNSTLKSLQMTYEEIGDIDSIDGLLKSFASTSFETKIEELQYSNKWQMALECFDILADITKHDSTAQIMTKSMFDHHLYKNVIQTVPKLVPDNIQKLNESNTNLLIRALESSILEGDLKSIEKWSSKIELMTTINDPELTLQYNLGKALLSISKGNHIKAGQFLDNCYQITGIQYTSTSNSTTLLKTQSLLTKLHGLHDLNMLNFSKDDFELQSNMQLLDLRRGKVGPDFDPNYYILSIRKTFDKIHKNPITKTDLVDTYFAIAQEARVNSRLDIASKALIFCLEKGHPYSELEFAEILWKDGENDRALKLVREINQKNEKSSSVSVRNKAEVLLKYTEWLDISNNSASEQIITQYKNIFALEPEWEQPYYSIGLYFSRLLERRKAEGYVSDGKLEFKSISYFLLAFEKNTVKVRENLPKVITFWLDTAAAVITETSPNRNTILKKVTTDICKQIETAIRNCPTYIWYSVLTQLLSRLLHPHLSSAKLIMHILLSLAVEYPSHILWHISVLCQSNSSKRVKCGQDILEKFRAHSDNQEDIINSSIYLTSSLTRICLQEVKSSSSRSGRSLVSDFKFDVNIAPTPMTVPVRKNLEMISPLSAETMKSYQPFRPTVSIAKFASSYKIFSSLKKPKKITIIGSDGMLYEIMCKKEDVRQDNQYMQFAATMDFLLSKDLDSSKRDLGITVYSVLSLREDCGLLEIVPDVVTLRSIFTTKYESKKIKYSMKALYEKWQGLADELKPVFFNEQTKKFSPVLHEWFLENFPDPINWYRARNLYSRSYAVMAMVGYILGLGDRHCENILLDIKTGKVLHVDFDCLFEKGENLPVPEIVPFRLTQNLQDALGILGTEGTFKKSSEVTLSLMRQNEVALMNIIETIMYDRNMDHSIQKALRKLRNKIRGIDPRDGLLLSVSGQAETLIQEATSTENLSKMYIGWLPFW</sequence>
<organism>
    <name type="scientific">Candida glabrata (strain ATCC 2001 / BCRC 20586 / JCM 3761 / NBRC 0622 / NRRL Y-65 / CBS 138)</name>
    <name type="common">Yeast</name>
    <name type="synonym">Nakaseomyces glabratus</name>
    <dbReference type="NCBI Taxonomy" id="284593"/>
    <lineage>
        <taxon>Eukaryota</taxon>
        <taxon>Fungi</taxon>
        <taxon>Dikarya</taxon>
        <taxon>Ascomycota</taxon>
        <taxon>Saccharomycotina</taxon>
        <taxon>Saccharomycetes</taxon>
        <taxon>Saccharomycetales</taxon>
        <taxon>Saccharomycetaceae</taxon>
        <taxon>Nakaseomyces</taxon>
    </lineage>
</organism>